<sequence>MFPGDMESKASSMNGDQPSSPTPSSSTSVTIPTYTPTSMYDQELQFSRSVAKHVYEAAATLRAAFLCGFQPYTDVASFAHDEIVSQLHYWSSFISFVNDPANNQAFTRMDILEVTRALVQCAEDTVLAGNDIHMIVAHLQIPQSEKGRIIKTFVTANSMLGDQPEVEVSNLVRSSLDGESTVYVIFGGQGNGDGYFAELAELYEVYQPLVGDLVRSASDLFRHLTDKMDVNDCFSEGMELMAWIDKDNDTPIPSRPYLLSSAISFPLITLLQLLHFKISFHYSGCSFKDVQRFLAGVTGHSQGIIAAAAIAAVDSPASFHELSLQAMTVSFSMGVRIHQYYGPQVLPQLITEACLAEGKPIPTPMLSVRGLSIETLATTIQDLNKSLPRTKVQLEVGLRNNDSNYVITGDPMSLRGLCTHFDHKKKALDIVYQFLPAAAPYHNSYLSIAASRAIEDCQEIILRGCDLKMPVFSTVDGSDLRNNEGANLVPDLIRMVCCQVVNWPAALNMPGATHILDFGPGGAQGVGVLANSMKAGQGVRVIHATVLNGLNTELGYKPDLFDRSRKASERVSKPQPWVNSFQPTLTRFTENKLVVSTRFTRLFLQPPIMVAAMTPTTTSWDFVAAVMKAGFHAELACGGFHDRDSLSAAITAIANQVEPGTGITCNVIYSSPTSLRWQIDELEKLVAAGYQIDGLSIGAGVPSVEVVQGYVERLQLQHIALKPGSTEAIERTLKIAKALQPLPVVLQWTGGRGGGHHSNQDFHAPLISMYGKIRAQDNVVLVVGSGFGGPSDTLPYITGKWASDMGLPPMPVDGILLGSRVMVAKEAHTSTEAKHLIVATEGAPDDEWSGTYSRPTGGVLSVISEMRQPIHKIATRAVRLWHELDQTIFHLGPKERVAEITRRRDEIIRRLNHDYHRVWFGCSGPTRDPVELDEMTYSEVLHRFVELAYVTAEHRWVHLSWKKLFSELLTRTMSRLHRTSDSRSETLVDDLDDPYSTLATLTDASAQLITYEDSIYFLQLFRRRGQKPVPFIPVLDADFETWFKKDSLWQSEDIAAVPNHDAQRVCILHGPVAAQYSTKVDEPVGEILGNIHTAWVTAILQTHYQGQSELVPVFDNSPFHASQVESSKTNTELSTPPLNHGLWTLEQWIVHIVQSRDKNLNWAKALLASPRVLCGRRLVPNPFITTLSGLRSMDIHVAETTKTGVGAGFTFFKIPLEETHQDLLDLTLQSNNEISIQISHYPTLQSAPITLTHHMSCQFSKLAMNKSLSDRSAMIRDFYRRIWLGTSHESSHKSIYDKFECEPYTVTADAIRKYNDCTRLPTSMPPTSWATSEVPLDFAVVIAWKALVKPLFSRELEADILKLLHVSNEITLHSDHSPPMVHDVLHTESQVTEVVLQPSGKMVQVEAHVFRGKSCILDLKTRFLLVGNDTHRDHLFRRSILPPSEILLEDEISAMQLVQSSWFQPLRDTSDLVGKRVVFQLEDLMQFHENGQIRCHQITGCAMLDGSIVGNCYLETPDDAYLSLMGNILSQQTGSSSQPAIFETPLLLFEEQEISFTAPTCEQTIAYSAASGDSNPIHVSPVFASLAGLSSPIVHGMHISAEVLQIVYTWLCASSMSRLKKSHVLFAGKVCTGDRLAVSMKHTAMHRGLRVVEVQIHKNMAEELVFVGTYEIEQPLTALVFTGQGSQKKGMGMDLRDKSAAARRIWDTADDHFQHEYGFRITDIVRHDPPSLTVHFGGVHGRRVRSNYMALTYERVASDGQIIEAKLFPTINENTTKYVFSSESGLLSSTQFTQPALGLMELAIMADLEARQLIPSNVTFAGHSLGEYSALMAVGHIMPLEVFISTVFYRGLVMQSTVTYDHHGRSKYAMCAVDPTRVSTDFDGQKLGWLVTQIASEGQWLLEVVNHNVIDSQYVCAGEAIALHCLGVVLDRIHYASKSFFDDGSFDLTDCIRESVKEIRKDRSKVVLSRSKASIPLKGLDVPFHSSHLRSGVDPFRRRLQRSIKLDNASPTKLIGRYIPNLTGKPFEVTRQYFNEVLRLTGSIPIQQALESWDRVASTI</sequence>
<proteinExistence type="inferred from homology"/>
<feature type="chain" id="PRO_0000450562" description="Fatty acid synthase subunit beta">
    <location>
        <begin position="1"/>
        <end position="2060"/>
    </location>
</feature>
<feature type="domain" description="MaoC-like" evidence="3">
    <location>
        <begin position="1549"/>
        <end position="1661"/>
    </location>
</feature>
<feature type="region of interest" description="Disordered" evidence="5">
    <location>
        <begin position="1"/>
        <end position="32"/>
    </location>
</feature>
<feature type="region of interest" description="Acetyltransferase (AT) domain" evidence="3">
    <location>
        <begin position="182"/>
        <end position="543"/>
    </location>
</feature>
<feature type="region of interest" description="Enoyl reductase (ER) domain" evidence="3">
    <location>
        <begin position="600"/>
        <end position="845"/>
    </location>
</feature>
<feature type="region of interest" description="Dehydratase (DH) domain" evidence="3">
    <location>
        <begin position="1157"/>
        <end position="1640"/>
    </location>
</feature>
<feature type="region of interest" description="Malonyl/palmitoyl transferase (MT/PT) domain" evidence="3">
    <location>
        <begin position="1679"/>
        <end position="2043"/>
    </location>
</feature>
<feature type="compositionally biased region" description="Low complexity" evidence="5">
    <location>
        <begin position="18"/>
        <end position="32"/>
    </location>
</feature>
<feature type="active site" description="For acetyltransferase activity" evidence="4">
    <location>
        <position position="301"/>
    </location>
</feature>
<feature type="active site" description="For malonyltransferase activity" evidence="4">
    <location>
        <position position="1824"/>
    </location>
</feature>
<comment type="function">
    <text evidence="6 9">Fatty acid synthase subunit beta; part of the gene cluster that mediates the biosynthesis of gramillins A and B, bicyclic lipopeptides that induce cell death in maize leaves but not in wheat leaves (PubMed:30395461). The nonribosomal peptide synthetase GRA1 incorporates respectively a glutamic adic (Glu), a leucine (Leu), a serine (Ser), a hydroxyglutamine (HOGln), a 2-amino decanoic acid, and 2 cysteins (CysB and CysA) (Probable). The biosynthesis of 2-amino decanoic acid incorporated in gramillins could be initiated by a fatty acid synthase composed of the alpha and beta subunits FGSG_00036 and FGSG_11656 (Probable). The cytochrome P450 monooxygenase FGSG_15680 could hydroxylate the fatty acid chain (Probable). Subsequent oxidation to the ketone by the oxidoreductase FGSG_00048 and transamination by aminotransferase FGSG_00049 could form 2-amino-decanoic acid (Probable). On the other hand, FGSG_15680 could also be responsible for the HO-modified glutamine at the gamma-position (Probable). Whether hydroxylation occurs on the fully assembled product or on the Gln residue prior to assembly into the gramillins requires further proof (Probable). The thioredoxin FGSG_00043 could also be required for the disulfide-bond formation between CysA and CysB (Probable). The specific involvement of the remaining proteins from the cluster is more difficult to discern, but could have broader regulatory (FGSG_00040 and FGSG_11657) or enzymatic functions (FGSG_00044 and FGSG_00045) (Probable). The final C-domain of GRA1 does not possess the expected sequence of a termination CT domain, often implicated in macrocyclization and release of a cyclopeptidein fungal NRPs; and the thioesterase FGSG_00047 may act in concert with the terminal C-domain of GRA1 to catalyze the formation of the macrocyclic anhydride and release of the products (Probable).</text>
</comment>
<comment type="catalytic activity">
    <reaction evidence="2">
        <text>acetyl-CoA + n malonyl-CoA + 2n NADPH + 4n H(+) = a long-chain-acyl-CoA + n CoA + n CO2 + 2n NADP(+).</text>
        <dbReference type="EC" id="2.3.1.86"/>
    </reaction>
</comment>
<comment type="catalytic activity">
    <reaction evidence="2">
        <text>holo-[ACP] + acetyl-CoA = acetyl-[ACP] + CoA</text>
        <dbReference type="Rhea" id="RHEA:41788"/>
        <dbReference type="Rhea" id="RHEA-COMP:9621"/>
        <dbReference type="Rhea" id="RHEA-COMP:9685"/>
        <dbReference type="ChEBI" id="CHEBI:57287"/>
        <dbReference type="ChEBI" id="CHEBI:57288"/>
        <dbReference type="ChEBI" id="CHEBI:64479"/>
        <dbReference type="ChEBI" id="CHEBI:78446"/>
        <dbReference type="EC" id="2.3.1.38"/>
    </reaction>
</comment>
<comment type="catalytic activity">
    <reaction evidence="2">
        <text>holo-[ACP] + malonyl-CoA = malonyl-[ACP] + CoA</text>
        <dbReference type="Rhea" id="RHEA:41792"/>
        <dbReference type="Rhea" id="RHEA-COMP:9623"/>
        <dbReference type="Rhea" id="RHEA-COMP:9685"/>
        <dbReference type="ChEBI" id="CHEBI:57287"/>
        <dbReference type="ChEBI" id="CHEBI:57384"/>
        <dbReference type="ChEBI" id="CHEBI:64479"/>
        <dbReference type="ChEBI" id="CHEBI:78449"/>
        <dbReference type="EC" id="2.3.1.39"/>
    </reaction>
</comment>
<comment type="catalytic activity">
    <reaction evidence="2">
        <text>a (3R)-hydroxyacyl-[ACP] = a (2E)-enoyl-[ACP] + H2O</text>
        <dbReference type="Rhea" id="RHEA:13097"/>
        <dbReference type="Rhea" id="RHEA-COMP:9925"/>
        <dbReference type="Rhea" id="RHEA-COMP:9945"/>
        <dbReference type="ChEBI" id="CHEBI:15377"/>
        <dbReference type="ChEBI" id="CHEBI:78784"/>
        <dbReference type="ChEBI" id="CHEBI:78827"/>
        <dbReference type="EC" id="4.2.1.59"/>
    </reaction>
</comment>
<comment type="catalytic activity">
    <reaction evidence="2">
        <text>a 2,3-saturated acyl-[ACP] + NAD(+) = a (2E)-enoyl-[ACP] + NADH + H(+)</text>
        <dbReference type="Rhea" id="RHEA:10240"/>
        <dbReference type="Rhea" id="RHEA-COMP:9925"/>
        <dbReference type="Rhea" id="RHEA-COMP:9926"/>
        <dbReference type="ChEBI" id="CHEBI:15378"/>
        <dbReference type="ChEBI" id="CHEBI:57540"/>
        <dbReference type="ChEBI" id="CHEBI:57945"/>
        <dbReference type="ChEBI" id="CHEBI:78784"/>
        <dbReference type="ChEBI" id="CHEBI:78785"/>
        <dbReference type="EC" id="1.3.1.9"/>
    </reaction>
</comment>
<comment type="catalytic activity">
    <reaction evidence="2">
        <text>(9Z)-octadecenoyl-[ACP] + H2O = (9Z)-octadecenoate + holo-[ACP] + H(+)</text>
        <dbReference type="Rhea" id="RHEA:15057"/>
        <dbReference type="Rhea" id="RHEA-COMP:9685"/>
        <dbReference type="Rhea" id="RHEA-COMP:9924"/>
        <dbReference type="ChEBI" id="CHEBI:15377"/>
        <dbReference type="ChEBI" id="CHEBI:15378"/>
        <dbReference type="ChEBI" id="CHEBI:30823"/>
        <dbReference type="ChEBI" id="CHEBI:64479"/>
        <dbReference type="ChEBI" id="CHEBI:78783"/>
        <dbReference type="EC" id="3.1.2.14"/>
    </reaction>
</comment>
<comment type="pathway">
    <text evidence="9">Mycotoxin biosynthesis.</text>
</comment>
<comment type="subunit">
    <text evidence="1">[Alpha(6)beta(6)] hexamers of two multifunctional subunits (alpha and beta).</text>
</comment>
<comment type="similarity">
    <text evidence="8">Belongs to the fungal fatty acid synthetase subunit beta family.</text>
</comment>
<reference key="1">
    <citation type="journal article" date="2007" name="Science">
        <title>The Fusarium graminearum genome reveals a link between localized polymorphism and pathogen specialization.</title>
        <authorList>
            <person name="Cuomo C.A."/>
            <person name="Gueldener U."/>
            <person name="Xu J.-R."/>
            <person name="Trail F."/>
            <person name="Turgeon B.G."/>
            <person name="Di Pietro A."/>
            <person name="Walton J.D."/>
            <person name="Ma L.-J."/>
            <person name="Baker S.E."/>
            <person name="Rep M."/>
            <person name="Adam G."/>
            <person name="Antoniw J."/>
            <person name="Baldwin T."/>
            <person name="Calvo S.E."/>
            <person name="Chang Y.-L."/>
            <person name="DeCaprio D."/>
            <person name="Gale L.R."/>
            <person name="Gnerre S."/>
            <person name="Goswami R.S."/>
            <person name="Hammond-Kosack K."/>
            <person name="Harris L.J."/>
            <person name="Hilburn K."/>
            <person name="Kennell J.C."/>
            <person name="Kroken S."/>
            <person name="Magnuson J.K."/>
            <person name="Mannhaupt G."/>
            <person name="Mauceli E.W."/>
            <person name="Mewes H.-W."/>
            <person name="Mitterbauer R."/>
            <person name="Muehlbauer G."/>
            <person name="Muensterkoetter M."/>
            <person name="Nelson D."/>
            <person name="O'Donnell K."/>
            <person name="Ouellet T."/>
            <person name="Qi W."/>
            <person name="Quesneville H."/>
            <person name="Roncero M.I.G."/>
            <person name="Seong K.-Y."/>
            <person name="Tetko I.V."/>
            <person name="Urban M."/>
            <person name="Waalwijk C."/>
            <person name="Ward T.J."/>
            <person name="Yao J."/>
            <person name="Birren B.W."/>
            <person name="Kistler H.C."/>
        </authorList>
    </citation>
    <scope>NUCLEOTIDE SEQUENCE [LARGE SCALE GENOMIC DNA]</scope>
    <source>
        <strain>ATCC MYA-4620 / CBS 123657 / FGSC 9075 / NRRL 31084 / PH-1</strain>
    </source>
</reference>
<reference key="2">
    <citation type="journal article" date="2010" name="Nature">
        <title>Comparative genomics reveals mobile pathogenicity chromosomes in Fusarium.</title>
        <authorList>
            <person name="Ma L.-J."/>
            <person name="van der Does H.C."/>
            <person name="Borkovich K.A."/>
            <person name="Coleman J.J."/>
            <person name="Daboussi M.-J."/>
            <person name="Di Pietro A."/>
            <person name="Dufresne M."/>
            <person name="Freitag M."/>
            <person name="Grabherr M."/>
            <person name="Henrissat B."/>
            <person name="Houterman P.M."/>
            <person name="Kang S."/>
            <person name="Shim W.-B."/>
            <person name="Woloshuk C."/>
            <person name="Xie X."/>
            <person name="Xu J.-R."/>
            <person name="Antoniw J."/>
            <person name="Baker S.E."/>
            <person name="Bluhm B.H."/>
            <person name="Breakspear A."/>
            <person name="Brown D.W."/>
            <person name="Butchko R.A.E."/>
            <person name="Chapman S."/>
            <person name="Coulson R."/>
            <person name="Coutinho P.M."/>
            <person name="Danchin E.G.J."/>
            <person name="Diener A."/>
            <person name="Gale L.R."/>
            <person name="Gardiner D.M."/>
            <person name="Goff S."/>
            <person name="Hammond-Kosack K.E."/>
            <person name="Hilburn K."/>
            <person name="Hua-Van A."/>
            <person name="Jonkers W."/>
            <person name="Kazan K."/>
            <person name="Kodira C.D."/>
            <person name="Koehrsen M."/>
            <person name="Kumar L."/>
            <person name="Lee Y.-H."/>
            <person name="Li L."/>
            <person name="Manners J.M."/>
            <person name="Miranda-Saavedra D."/>
            <person name="Mukherjee M."/>
            <person name="Park G."/>
            <person name="Park J."/>
            <person name="Park S.-Y."/>
            <person name="Proctor R.H."/>
            <person name="Regev A."/>
            <person name="Ruiz-Roldan M.C."/>
            <person name="Sain D."/>
            <person name="Sakthikumar S."/>
            <person name="Sykes S."/>
            <person name="Schwartz D.C."/>
            <person name="Turgeon B.G."/>
            <person name="Wapinski I."/>
            <person name="Yoder O."/>
            <person name="Young S."/>
            <person name="Zeng Q."/>
            <person name="Zhou S."/>
            <person name="Galagan J."/>
            <person name="Cuomo C.A."/>
            <person name="Kistler H.C."/>
            <person name="Rep M."/>
        </authorList>
    </citation>
    <scope>GENOME REANNOTATION</scope>
    <source>
        <strain>ATCC MYA-4620 / CBS 123657 / FGSC 9075 / NRRL 31084 / PH-1</strain>
    </source>
</reference>
<reference key="3">
    <citation type="journal article" date="2015" name="BMC Genomics">
        <title>The completed genome sequence of the pathogenic ascomycete fungus Fusarium graminearum.</title>
        <authorList>
            <person name="King R."/>
            <person name="Urban M."/>
            <person name="Hammond-Kosack M.C.U."/>
            <person name="Hassani-Pak K."/>
            <person name="Hammond-Kosack K.E."/>
        </authorList>
    </citation>
    <scope>NUCLEOTIDE SEQUENCE [LARGE SCALE GENOMIC DNA]</scope>
    <source>
        <strain>ATCC MYA-4620 / CBS 123657 / FGSC 9075 / NRRL 31084 / PH-1</strain>
    </source>
</reference>
<reference key="4">
    <citation type="journal article" date="2018" name="J. Am. Chem. Soc.">
        <title>Gramillin A and B: cyclic lipopeptides identified as the nonribosomal biosynthetic products of Fusarium graminearum.</title>
        <authorList>
            <person name="Bahadoor A."/>
            <person name="Brauer E.K."/>
            <person name="Bosnich W."/>
            <person name="Schneiderman D."/>
            <person name="Johnston A."/>
            <person name="Aubin Y."/>
            <person name="Blackwell B."/>
            <person name="Melanson J.E."/>
            <person name="Harris L.J."/>
        </authorList>
    </citation>
    <scope>FUNCTION</scope>
    <scope>PATHWAY</scope>
</reference>
<keyword id="KW-0378">Hydrolase</keyword>
<keyword id="KW-0456">Lyase</keyword>
<keyword id="KW-0511">Multifunctional enzyme</keyword>
<keyword id="KW-0520">NAD</keyword>
<keyword id="KW-0521">NADP</keyword>
<keyword id="KW-0560">Oxidoreductase</keyword>
<keyword id="KW-1185">Reference proteome</keyword>
<keyword id="KW-0808">Transferase</keyword>
<name>GRA7_GIBZE</name>
<gene>
    <name type="ORF">FG00037</name>
    <name type="ORF">FGRAMPH1_01T00131</name>
    <name type="ORF">FGSG_11656</name>
</gene>
<protein>
    <recommendedName>
        <fullName evidence="7">Fatty acid synthase subunit beta</fullName>
        <ecNumber evidence="9">2.3.1.86</ecNumber>
    </recommendedName>
    <alternativeName>
        <fullName evidence="2">S-acyl fatty acid synthase thioesterase</fullName>
        <ecNumber evidence="2">3.1.2.14</ecNumber>
    </alternativeName>
    <domain>
        <recommendedName>
            <fullName evidence="2">3-hydroxyacyl-[acyl-carrier-protein] dehydratase</fullName>
            <ecNumber evidence="2">4.2.1.59</ecNumber>
        </recommendedName>
    </domain>
    <domain>
        <recommendedName>
            <fullName evidence="2">Enoyl-[acyl-carrier-protein] reductase [NADH]</fullName>
            <ecNumber evidence="2">1.3.1.9</ecNumber>
        </recommendedName>
    </domain>
    <domain>
        <recommendedName>
            <fullName evidence="2">[Acyl-carrier-protein] acetyltransferase</fullName>
            <ecNumber evidence="2">2.3.1.38</ecNumber>
        </recommendedName>
        <alternativeName>
            <fullName evidence="7">Gramillins biosynthesis cluster protein FGSG_11656</fullName>
        </alternativeName>
        <alternativeName>
            <fullName evidence="2">[Acyl-carrier-protein] malonyltransferase</fullName>
            <ecNumber evidence="2">2.3.1.39</ecNumber>
        </alternativeName>
    </domain>
</protein>
<organism>
    <name type="scientific">Gibberella zeae (strain ATCC MYA-4620 / CBS 123657 / FGSC 9075 / NRRL 31084 / PH-1)</name>
    <name type="common">Wheat head blight fungus</name>
    <name type="synonym">Fusarium graminearum</name>
    <dbReference type="NCBI Taxonomy" id="229533"/>
    <lineage>
        <taxon>Eukaryota</taxon>
        <taxon>Fungi</taxon>
        <taxon>Dikarya</taxon>
        <taxon>Ascomycota</taxon>
        <taxon>Pezizomycotina</taxon>
        <taxon>Sordariomycetes</taxon>
        <taxon>Hypocreomycetidae</taxon>
        <taxon>Hypocreales</taxon>
        <taxon>Nectriaceae</taxon>
        <taxon>Fusarium</taxon>
    </lineage>
</organism>
<evidence type="ECO:0000250" key="1">
    <source>
        <dbReference type="UniProtKB" id="P19097"/>
    </source>
</evidence>
<evidence type="ECO:0000250" key="2">
    <source>
        <dbReference type="UniProtKB" id="Q8TGA1"/>
    </source>
</evidence>
<evidence type="ECO:0000255" key="3"/>
<evidence type="ECO:0000255" key="4">
    <source>
        <dbReference type="PIRSR" id="PIRSR005562-1"/>
    </source>
</evidence>
<evidence type="ECO:0000256" key="5">
    <source>
        <dbReference type="SAM" id="MobiDB-lite"/>
    </source>
</evidence>
<evidence type="ECO:0000269" key="6">
    <source>
    </source>
</evidence>
<evidence type="ECO:0000303" key="7">
    <source>
    </source>
</evidence>
<evidence type="ECO:0000305" key="8"/>
<evidence type="ECO:0000305" key="9">
    <source>
    </source>
</evidence>
<accession>I1S489</accession>
<accession>A0A098D0C5</accession>
<dbReference type="EC" id="2.3.1.86" evidence="9"/>
<dbReference type="EC" id="3.1.2.14" evidence="2"/>
<dbReference type="EC" id="4.2.1.59" evidence="2"/>
<dbReference type="EC" id="1.3.1.9" evidence="2"/>
<dbReference type="EC" id="2.3.1.38" evidence="2"/>
<dbReference type="EC" id="2.3.1.39" evidence="2"/>
<dbReference type="EMBL" id="HG970332">
    <property type="protein sequence ID" value="CEF71865.1"/>
    <property type="molecule type" value="Genomic_DNA"/>
</dbReference>
<dbReference type="RefSeq" id="XP_011315624.1">
    <property type="nucleotide sequence ID" value="XM_011317322.1"/>
</dbReference>
<dbReference type="SMR" id="I1S489"/>
<dbReference type="STRING" id="229533.I1S489"/>
<dbReference type="GeneID" id="23558475"/>
<dbReference type="KEGG" id="fgr:FGSG_11656"/>
<dbReference type="VEuPathDB" id="FungiDB:FGRAMPH1_01G00131"/>
<dbReference type="eggNOG" id="ENOG502QQJX">
    <property type="taxonomic scope" value="Eukaryota"/>
</dbReference>
<dbReference type="HOGENOM" id="CLU_000114_5_0_1"/>
<dbReference type="InParanoid" id="I1S489"/>
<dbReference type="OrthoDB" id="59205at110618"/>
<dbReference type="Proteomes" id="UP000070720">
    <property type="component" value="Chromosome 1"/>
</dbReference>
<dbReference type="GO" id="GO:0005835">
    <property type="term" value="C:fatty acid synthase complex"/>
    <property type="evidence" value="ECO:0007669"/>
    <property type="project" value="InterPro"/>
</dbReference>
<dbReference type="GO" id="GO:0019171">
    <property type="term" value="F:(3R)-hydroxyacyl-[acyl-carrier-protein] dehydratase activity"/>
    <property type="evidence" value="ECO:0007669"/>
    <property type="project" value="UniProtKB-EC"/>
</dbReference>
<dbReference type="GO" id="GO:0004313">
    <property type="term" value="F:[acyl-carrier-protein] S-acetyltransferase activity"/>
    <property type="evidence" value="ECO:0007669"/>
    <property type="project" value="UniProtKB-EC"/>
</dbReference>
<dbReference type="GO" id="GO:0004314">
    <property type="term" value="F:[acyl-carrier-protein] S-malonyltransferase activity"/>
    <property type="evidence" value="ECO:0007669"/>
    <property type="project" value="UniProtKB-EC"/>
</dbReference>
<dbReference type="GO" id="GO:0004318">
    <property type="term" value="F:enoyl-[acyl-carrier-protein] reductase (NADH) activity"/>
    <property type="evidence" value="ECO:0007669"/>
    <property type="project" value="UniProtKB-EC"/>
</dbReference>
<dbReference type="GO" id="GO:0004312">
    <property type="term" value="F:fatty acid synthase activity"/>
    <property type="evidence" value="ECO:0007669"/>
    <property type="project" value="InterPro"/>
</dbReference>
<dbReference type="GO" id="GO:0016297">
    <property type="term" value="F:fatty acyl-[ACP] hydrolase activity"/>
    <property type="evidence" value="ECO:0007669"/>
    <property type="project" value="UniProtKB-EC"/>
</dbReference>
<dbReference type="GO" id="GO:0004321">
    <property type="term" value="F:fatty-acyl-CoA synthase activity"/>
    <property type="evidence" value="ECO:0007669"/>
    <property type="project" value="UniProtKB-EC"/>
</dbReference>
<dbReference type="GO" id="GO:0006633">
    <property type="term" value="P:fatty acid biosynthetic process"/>
    <property type="evidence" value="ECO:0007669"/>
    <property type="project" value="InterPro"/>
</dbReference>
<dbReference type="CDD" id="cd03447">
    <property type="entry name" value="FAS_MaoC"/>
    <property type="match status" value="1"/>
</dbReference>
<dbReference type="Gene3D" id="1.20.1050.120">
    <property type="match status" value="1"/>
</dbReference>
<dbReference type="Gene3D" id="1.20.930.70">
    <property type="match status" value="1"/>
</dbReference>
<dbReference type="Gene3D" id="3.30.1120.100">
    <property type="match status" value="1"/>
</dbReference>
<dbReference type="Gene3D" id="3.30.70.3320">
    <property type="match status" value="1"/>
</dbReference>
<dbReference type="Gene3D" id="3.30.70.3330">
    <property type="match status" value="1"/>
</dbReference>
<dbReference type="Gene3D" id="6.10.60.10">
    <property type="match status" value="1"/>
</dbReference>
<dbReference type="Gene3D" id="3.20.20.70">
    <property type="entry name" value="Aldolase class I"/>
    <property type="match status" value="1"/>
</dbReference>
<dbReference type="Gene3D" id="3.10.129.10">
    <property type="entry name" value="Hotdog Thioesterase"/>
    <property type="match status" value="1"/>
</dbReference>
<dbReference type="Gene3D" id="3.40.366.10">
    <property type="entry name" value="Malonyl-Coenzyme A Acyl Carrier Protein, domain 2"/>
    <property type="match status" value="3"/>
</dbReference>
<dbReference type="InterPro" id="IPR001227">
    <property type="entry name" value="Ac_transferase_dom_sf"/>
</dbReference>
<dbReference type="InterPro" id="IPR014043">
    <property type="entry name" value="Acyl_transferase_dom"/>
</dbReference>
<dbReference type="InterPro" id="IPR016035">
    <property type="entry name" value="Acyl_Trfase/lysoPLipase"/>
</dbReference>
<dbReference type="InterPro" id="IPR013785">
    <property type="entry name" value="Aldolase_TIM"/>
</dbReference>
<dbReference type="InterPro" id="IPR039569">
    <property type="entry name" value="FAS1-like_DH_region"/>
</dbReference>
<dbReference type="InterPro" id="IPR016452">
    <property type="entry name" value="Fas1/AflB-like"/>
</dbReference>
<dbReference type="InterPro" id="IPR013565">
    <property type="entry name" value="Fas1/AflB-like_central"/>
</dbReference>
<dbReference type="InterPro" id="IPR041099">
    <property type="entry name" value="FAS1_N"/>
</dbReference>
<dbReference type="InterPro" id="IPR040883">
    <property type="entry name" value="FAS_meander"/>
</dbReference>
<dbReference type="InterPro" id="IPR003965">
    <property type="entry name" value="Fatty_acid_synthase"/>
</dbReference>
<dbReference type="InterPro" id="IPR050830">
    <property type="entry name" value="Fungal_FAS"/>
</dbReference>
<dbReference type="InterPro" id="IPR029069">
    <property type="entry name" value="HotDog_dom_sf"/>
</dbReference>
<dbReference type="InterPro" id="IPR002539">
    <property type="entry name" value="MaoC-like_dom"/>
</dbReference>
<dbReference type="InterPro" id="IPR032088">
    <property type="entry name" value="SAT"/>
</dbReference>
<dbReference type="PANTHER" id="PTHR10982:SF21">
    <property type="entry name" value="FATTY ACID SYNTHASE SUBUNIT BETA"/>
    <property type="match status" value="1"/>
</dbReference>
<dbReference type="PANTHER" id="PTHR10982">
    <property type="entry name" value="MALONYL COA-ACYL CARRIER PROTEIN TRANSACYLASE"/>
    <property type="match status" value="1"/>
</dbReference>
<dbReference type="Pfam" id="PF00698">
    <property type="entry name" value="Acyl_transf_1"/>
    <property type="match status" value="1"/>
</dbReference>
<dbReference type="Pfam" id="PF08354">
    <property type="entry name" value="Fas1-AflB-like_hel"/>
    <property type="match status" value="1"/>
</dbReference>
<dbReference type="Pfam" id="PF13452">
    <property type="entry name" value="FAS1_DH_region"/>
    <property type="match status" value="1"/>
</dbReference>
<dbReference type="Pfam" id="PF17951">
    <property type="entry name" value="FAS_meander"/>
    <property type="match status" value="1"/>
</dbReference>
<dbReference type="Pfam" id="PF17828">
    <property type="entry name" value="FAS_N"/>
    <property type="match status" value="1"/>
</dbReference>
<dbReference type="Pfam" id="PF01575">
    <property type="entry name" value="MaoC_dehydratas"/>
    <property type="match status" value="1"/>
</dbReference>
<dbReference type="Pfam" id="PF16073">
    <property type="entry name" value="SAT"/>
    <property type="match status" value="1"/>
</dbReference>
<dbReference type="PIRSF" id="PIRSF005562">
    <property type="entry name" value="FAS_yeast_beta"/>
    <property type="match status" value="1"/>
</dbReference>
<dbReference type="PRINTS" id="PR01483">
    <property type="entry name" value="FASYNTHASE"/>
</dbReference>
<dbReference type="SMART" id="SM00827">
    <property type="entry name" value="PKS_AT"/>
    <property type="match status" value="1"/>
</dbReference>
<dbReference type="SUPFAM" id="SSF52151">
    <property type="entry name" value="FabD/lysophospholipase-like"/>
    <property type="match status" value="2"/>
</dbReference>
<dbReference type="SUPFAM" id="SSF51412">
    <property type="entry name" value="Inosine monophosphate dehydrogenase (IMPDH)"/>
    <property type="match status" value="1"/>
</dbReference>
<dbReference type="SUPFAM" id="SSF54637">
    <property type="entry name" value="Thioesterase/thiol ester dehydrase-isomerase"/>
    <property type="match status" value="2"/>
</dbReference>